<accession>Q0AKV7</accession>
<reference key="1">
    <citation type="submission" date="2006-08" db="EMBL/GenBank/DDBJ databases">
        <title>Complete sequence of Maricaulis maris MCS10.</title>
        <authorList>
            <consortium name="US DOE Joint Genome Institute"/>
            <person name="Copeland A."/>
            <person name="Lucas S."/>
            <person name="Lapidus A."/>
            <person name="Barry K."/>
            <person name="Detter J.C."/>
            <person name="Glavina del Rio T."/>
            <person name="Hammon N."/>
            <person name="Israni S."/>
            <person name="Dalin E."/>
            <person name="Tice H."/>
            <person name="Pitluck S."/>
            <person name="Saunders E."/>
            <person name="Brettin T."/>
            <person name="Bruce D."/>
            <person name="Han C."/>
            <person name="Tapia R."/>
            <person name="Gilna P."/>
            <person name="Schmutz J."/>
            <person name="Larimer F."/>
            <person name="Land M."/>
            <person name="Hauser L."/>
            <person name="Kyrpides N."/>
            <person name="Mikhailova N."/>
            <person name="Viollier P."/>
            <person name="Stephens C."/>
            <person name="Richardson P."/>
        </authorList>
    </citation>
    <scope>NUCLEOTIDE SEQUENCE [LARGE SCALE GENOMIC DNA]</scope>
    <source>
        <strain>MCS10</strain>
    </source>
</reference>
<gene>
    <name evidence="1" type="primary">atpH</name>
    <name type="ordered locus">Mmar10_2805</name>
</gene>
<organism>
    <name type="scientific">Maricaulis maris (strain MCS10)</name>
    <name type="common">Caulobacter maris</name>
    <dbReference type="NCBI Taxonomy" id="394221"/>
    <lineage>
        <taxon>Bacteria</taxon>
        <taxon>Pseudomonadati</taxon>
        <taxon>Pseudomonadota</taxon>
        <taxon>Alphaproteobacteria</taxon>
        <taxon>Maricaulales</taxon>
        <taxon>Maricaulaceae</taxon>
        <taxon>Maricaulis</taxon>
    </lineage>
</organism>
<proteinExistence type="inferred from homology"/>
<name>ATPD_MARMM</name>
<evidence type="ECO:0000255" key="1">
    <source>
        <dbReference type="HAMAP-Rule" id="MF_01416"/>
    </source>
</evidence>
<feature type="chain" id="PRO_0000382120" description="ATP synthase subunit delta">
    <location>
        <begin position="1"/>
        <end position="179"/>
    </location>
</feature>
<protein>
    <recommendedName>
        <fullName evidence="1">ATP synthase subunit delta</fullName>
    </recommendedName>
    <alternativeName>
        <fullName evidence="1">ATP synthase F(1) sector subunit delta</fullName>
    </alternativeName>
    <alternativeName>
        <fullName evidence="1">F-type ATPase subunit delta</fullName>
        <shortName evidence="1">F-ATPase subunit delta</shortName>
    </alternativeName>
</protein>
<comment type="function">
    <text evidence="1">F(1)F(0) ATP synthase produces ATP from ADP in the presence of a proton or sodium gradient. F-type ATPases consist of two structural domains, F(1) containing the extramembraneous catalytic core and F(0) containing the membrane proton channel, linked together by a central stalk and a peripheral stalk. During catalysis, ATP synthesis in the catalytic domain of F(1) is coupled via a rotary mechanism of the central stalk subunits to proton translocation.</text>
</comment>
<comment type="function">
    <text evidence="1">This protein is part of the stalk that links CF(0) to CF(1). It either transmits conformational changes from CF(0) to CF(1) or is implicated in proton conduction.</text>
</comment>
<comment type="subunit">
    <text evidence="1">F-type ATPases have 2 components, F(1) - the catalytic core - and F(0) - the membrane proton channel. F(1) has five subunits: alpha(3), beta(3), gamma(1), delta(1), epsilon(1). F(0) has three main subunits: a(1), b(2) and c(10-14). The alpha and beta chains form an alternating ring which encloses part of the gamma chain. F(1) is attached to F(0) by a central stalk formed by the gamma and epsilon chains, while a peripheral stalk is formed by the delta and b chains.</text>
</comment>
<comment type="subcellular location">
    <subcellularLocation>
        <location evidence="1">Cell inner membrane</location>
        <topology evidence="1">Peripheral membrane protein</topology>
    </subcellularLocation>
</comment>
<comment type="similarity">
    <text evidence="1">Belongs to the ATPase delta chain family.</text>
</comment>
<dbReference type="EMBL" id="CP000449">
    <property type="protein sequence ID" value="ABI67086.1"/>
    <property type="molecule type" value="Genomic_DNA"/>
</dbReference>
<dbReference type="RefSeq" id="WP_011644730.1">
    <property type="nucleotide sequence ID" value="NC_008347.1"/>
</dbReference>
<dbReference type="SMR" id="Q0AKV7"/>
<dbReference type="STRING" id="394221.Mmar10_2805"/>
<dbReference type="KEGG" id="mmr:Mmar10_2805"/>
<dbReference type="eggNOG" id="COG0712">
    <property type="taxonomic scope" value="Bacteria"/>
</dbReference>
<dbReference type="HOGENOM" id="CLU_085114_0_1_5"/>
<dbReference type="OrthoDB" id="9796185at2"/>
<dbReference type="Proteomes" id="UP000001964">
    <property type="component" value="Chromosome"/>
</dbReference>
<dbReference type="GO" id="GO:0005886">
    <property type="term" value="C:plasma membrane"/>
    <property type="evidence" value="ECO:0007669"/>
    <property type="project" value="UniProtKB-SubCell"/>
</dbReference>
<dbReference type="GO" id="GO:0045259">
    <property type="term" value="C:proton-transporting ATP synthase complex"/>
    <property type="evidence" value="ECO:0007669"/>
    <property type="project" value="UniProtKB-KW"/>
</dbReference>
<dbReference type="GO" id="GO:0046933">
    <property type="term" value="F:proton-transporting ATP synthase activity, rotational mechanism"/>
    <property type="evidence" value="ECO:0007669"/>
    <property type="project" value="UniProtKB-UniRule"/>
</dbReference>
<dbReference type="Gene3D" id="1.10.520.20">
    <property type="entry name" value="N-terminal domain of the delta subunit of the F1F0-ATP synthase"/>
    <property type="match status" value="1"/>
</dbReference>
<dbReference type="HAMAP" id="MF_01416">
    <property type="entry name" value="ATP_synth_delta_bact"/>
    <property type="match status" value="1"/>
</dbReference>
<dbReference type="InterPro" id="IPR026015">
    <property type="entry name" value="ATP_synth_OSCP/delta_N_sf"/>
</dbReference>
<dbReference type="InterPro" id="IPR000711">
    <property type="entry name" value="ATPase_OSCP/dsu"/>
</dbReference>
<dbReference type="NCBIfam" id="TIGR01145">
    <property type="entry name" value="ATP_synt_delta"/>
    <property type="match status" value="1"/>
</dbReference>
<dbReference type="NCBIfam" id="NF004406">
    <property type="entry name" value="PRK05758.3-2"/>
    <property type="match status" value="1"/>
</dbReference>
<dbReference type="PANTHER" id="PTHR11910">
    <property type="entry name" value="ATP SYNTHASE DELTA CHAIN"/>
    <property type="match status" value="1"/>
</dbReference>
<dbReference type="Pfam" id="PF00213">
    <property type="entry name" value="OSCP"/>
    <property type="match status" value="1"/>
</dbReference>
<dbReference type="PRINTS" id="PR00125">
    <property type="entry name" value="ATPASEDELTA"/>
</dbReference>
<dbReference type="SUPFAM" id="SSF47928">
    <property type="entry name" value="N-terminal domain of the delta subunit of the F1F0-ATP synthase"/>
    <property type="match status" value="1"/>
</dbReference>
<sequence>MTAEAAGRYATALFELAKSEGAAEAVEADLAALRAMLTESPELADALASPLHAVEVKAGILSALAKKAKFNVLTANAFGVAARNGRAGDLGDLARVYAALAAADRGVVTADVQTAAALTKKQTEALAASLKSAFGREIEVRTEVRPELMGGLIVKVGSRMFDSSLRSKLDGMKTAMKEA</sequence>
<keyword id="KW-0066">ATP synthesis</keyword>
<keyword id="KW-0997">Cell inner membrane</keyword>
<keyword id="KW-1003">Cell membrane</keyword>
<keyword id="KW-0139">CF(1)</keyword>
<keyword id="KW-0375">Hydrogen ion transport</keyword>
<keyword id="KW-0406">Ion transport</keyword>
<keyword id="KW-0472">Membrane</keyword>
<keyword id="KW-1185">Reference proteome</keyword>
<keyword id="KW-0813">Transport</keyword>